<protein>
    <recommendedName>
        <fullName evidence="2">Katanin p60 ATPase-containing subunit A-like 2</fullName>
        <shortName evidence="2">Katanin p60 subunit A-like 2</shortName>
        <ecNumber evidence="2">5.6.1.1</ecNumber>
    </recommendedName>
    <alternativeName>
        <fullName evidence="2">p60 katanin-like 2</fullName>
    </alternativeName>
</protein>
<evidence type="ECO:0000250" key="1">
    <source>
        <dbReference type="UniProtKB" id="Q8IYT4"/>
    </source>
</evidence>
<evidence type="ECO:0000255" key="2">
    <source>
        <dbReference type="HAMAP-Rule" id="MF_03025"/>
    </source>
</evidence>
<evidence type="ECO:0000256" key="3">
    <source>
        <dbReference type="SAM" id="MobiDB-lite"/>
    </source>
</evidence>
<comment type="function">
    <text evidence="2">Severs microtubules in vitro in an ATP-dependent manner. This activity may promote rapid reorganization of cellular microtubule arrays.</text>
</comment>
<comment type="catalytic activity">
    <reaction evidence="2">
        <text>n ATP + n H2O + a microtubule = n ADP + n phosphate + (n+1) alpha/beta tubulin heterodimers.</text>
        <dbReference type="EC" id="5.6.1.1"/>
    </reaction>
</comment>
<comment type="subcellular location">
    <subcellularLocation>
        <location evidence="2">Cytoplasm</location>
        <location evidence="2">Cytoskeleton</location>
    </subcellularLocation>
    <subcellularLocation>
        <location evidence="1">Cytoplasm</location>
    </subcellularLocation>
    <subcellularLocation>
        <location evidence="1">Cytoplasm</location>
        <location evidence="1">Cytoskeleton</location>
        <location evidence="1">Spindle</location>
    </subcellularLocation>
    <subcellularLocation>
        <location evidence="1">Cytoplasm</location>
        <location evidence="1">Cytoskeleton</location>
        <location evidence="1">Spindle pole</location>
    </subcellularLocation>
    <text evidence="1">Localizes within the cytoplasm, partially overlapping with microtubules in interphase and to the mitotic spindle and spindle poles during mitosis.</text>
</comment>
<comment type="similarity">
    <text evidence="2">Belongs to the AAA ATPase family. Katanin p60 subunit A1 subfamily. A-like 2 sub-subfamily.</text>
</comment>
<gene>
    <name type="primary">katnal2</name>
</gene>
<proteinExistence type="evidence at transcript level"/>
<organism>
    <name type="scientific">Xenopus tropicalis</name>
    <name type="common">Western clawed frog</name>
    <name type="synonym">Silurana tropicalis</name>
    <dbReference type="NCBI Taxonomy" id="8364"/>
    <lineage>
        <taxon>Eukaryota</taxon>
        <taxon>Metazoa</taxon>
        <taxon>Chordata</taxon>
        <taxon>Craniata</taxon>
        <taxon>Vertebrata</taxon>
        <taxon>Euteleostomi</taxon>
        <taxon>Amphibia</taxon>
        <taxon>Batrachia</taxon>
        <taxon>Anura</taxon>
        <taxon>Pipoidea</taxon>
        <taxon>Pipidae</taxon>
        <taxon>Xenopodinae</taxon>
        <taxon>Xenopus</taxon>
        <taxon>Silurana</taxon>
    </lineage>
</organism>
<name>KATL2_XENTR</name>
<sequence length="542" mass="60918">MELSYQALRVASQNREAEELRTEARRKNLLILIMHYLLQEGYMDSANSLEQETKISLRRFDVCDNVDLETILMEYESYYYIKFQKYPKITKKALDHDSRVQSKPRSAGKLRRAGSNSTQGLPRIAQQTVLHRPVSGSYFRTHAHQKALSRENSKQENGGNSPREASEIGLNVSAISKTSGEGGQTRRRQVIDFRSMIQDTIKGASQEIALNSLNCNPDPSERLIKPVGAFIGGNSEMRELAAVISRDIYLQNPNVRWDDIIGLDAAKRLVKEAVVYPIRYPQLFTGILSPWKGLLLYGPPGTGKTLLAKAVATECNTTFFNISASTIVSKWRGDSEKLVRVLFELARYHAPSTIFLDELESVMSQRGTGPGGEHEGSRRMKTELLVQMDGLARSDDLVFVLAASNLPWELDYAMLRRLEKRILVDLPSKEARQAMIQHWLPPVSNSSGVELRTDLDYSTLGAETDGYSGSDIRLVCKEAAMRPVRKIFDALENHHSEHKNLPVISLDTVTTSDFLEVLAHTKPSAKSLAEKYAAWQKEFESV</sequence>
<dbReference type="EC" id="5.6.1.1" evidence="2"/>
<dbReference type="EMBL" id="BC125808">
    <property type="protein sequence ID" value="AAI25809.1"/>
    <property type="molecule type" value="mRNA"/>
</dbReference>
<dbReference type="RefSeq" id="NP_001090643.1">
    <property type="nucleotide sequence ID" value="NM_001097174.1"/>
</dbReference>
<dbReference type="SMR" id="A0JMA9"/>
<dbReference type="FunCoup" id="A0JMA9">
    <property type="interactions" value="295"/>
</dbReference>
<dbReference type="STRING" id="8364.ENSXETP00000027688"/>
<dbReference type="PaxDb" id="8364-ENSXETP00000061187"/>
<dbReference type="DNASU" id="100036615"/>
<dbReference type="GeneID" id="100036615"/>
<dbReference type="KEGG" id="xtr:100036615"/>
<dbReference type="AGR" id="Xenbase:XB-GENE-5827282"/>
<dbReference type="CTD" id="83473"/>
<dbReference type="Xenbase" id="XB-GENE-5827282">
    <property type="gene designation" value="katnal2"/>
</dbReference>
<dbReference type="eggNOG" id="KOG0738">
    <property type="taxonomic scope" value="Eukaryota"/>
</dbReference>
<dbReference type="InParanoid" id="A0JMA9"/>
<dbReference type="OMA" id="MKTQGKY"/>
<dbReference type="OrthoDB" id="191529at2759"/>
<dbReference type="Proteomes" id="UP000008143">
    <property type="component" value="Chromosome 1"/>
</dbReference>
<dbReference type="GO" id="GO:0005737">
    <property type="term" value="C:cytoplasm"/>
    <property type="evidence" value="ECO:0000250"/>
    <property type="project" value="UniProtKB"/>
</dbReference>
<dbReference type="GO" id="GO:0005874">
    <property type="term" value="C:microtubule"/>
    <property type="evidence" value="ECO:0000250"/>
    <property type="project" value="UniProtKB"/>
</dbReference>
<dbReference type="GO" id="GO:0005819">
    <property type="term" value="C:spindle"/>
    <property type="evidence" value="ECO:0000250"/>
    <property type="project" value="UniProtKB"/>
</dbReference>
<dbReference type="GO" id="GO:0000922">
    <property type="term" value="C:spindle pole"/>
    <property type="evidence" value="ECO:0000250"/>
    <property type="project" value="UniProtKB"/>
</dbReference>
<dbReference type="GO" id="GO:0005524">
    <property type="term" value="F:ATP binding"/>
    <property type="evidence" value="ECO:0007669"/>
    <property type="project" value="UniProtKB-KW"/>
</dbReference>
<dbReference type="GO" id="GO:0016887">
    <property type="term" value="F:ATP hydrolysis activity"/>
    <property type="evidence" value="ECO:0007669"/>
    <property type="project" value="InterPro"/>
</dbReference>
<dbReference type="GO" id="GO:0008017">
    <property type="term" value="F:microtubule binding"/>
    <property type="evidence" value="ECO:0007669"/>
    <property type="project" value="UniProtKB-UniRule"/>
</dbReference>
<dbReference type="GO" id="GO:0008568">
    <property type="term" value="F:microtubule severing ATPase activity"/>
    <property type="evidence" value="ECO:0007669"/>
    <property type="project" value="UniProtKB-EC"/>
</dbReference>
<dbReference type="GO" id="GO:0051013">
    <property type="term" value="P:microtubule severing"/>
    <property type="evidence" value="ECO:0007669"/>
    <property type="project" value="UniProtKB-UniRule"/>
</dbReference>
<dbReference type="CDD" id="cd19509">
    <property type="entry name" value="RecA-like_VPS4-like"/>
    <property type="match status" value="1"/>
</dbReference>
<dbReference type="FunFam" id="1.10.8.60:FF:000048">
    <property type="entry name" value="Katanin p60 ATPase-containing subunit A-like 2"/>
    <property type="match status" value="1"/>
</dbReference>
<dbReference type="FunFam" id="3.40.50.300:FF:000434">
    <property type="entry name" value="Katanin p60 ATPase-containing subunit A-like 2"/>
    <property type="match status" value="1"/>
</dbReference>
<dbReference type="Gene3D" id="1.10.8.60">
    <property type="match status" value="1"/>
</dbReference>
<dbReference type="Gene3D" id="3.40.50.300">
    <property type="entry name" value="P-loop containing nucleotide triphosphate hydrolases"/>
    <property type="match status" value="1"/>
</dbReference>
<dbReference type="HAMAP" id="MF_03025">
    <property type="entry name" value="Katanin_p60_AL2"/>
    <property type="match status" value="1"/>
</dbReference>
<dbReference type="InterPro" id="IPR003593">
    <property type="entry name" value="AAA+_ATPase"/>
</dbReference>
<dbReference type="InterPro" id="IPR041569">
    <property type="entry name" value="AAA_lid_3"/>
</dbReference>
<dbReference type="InterPro" id="IPR003959">
    <property type="entry name" value="ATPase_AAA_core"/>
</dbReference>
<dbReference type="InterPro" id="IPR027497">
    <property type="entry name" value="Katanin_p60_AL2"/>
</dbReference>
<dbReference type="InterPro" id="IPR006594">
    <property type="entry name" value="LisH"/>
</dbReference>
<dbReference type="InterPro" id="IPR050304">
    <property type="entry name" value="MT-severing_AAA_ATPase"/>
</dbReference>
<dbReference type="InterPro" id="IPR027417">
    <property type="entry name" value="P-loop_NTPase"/>
</dbReference>
<dbReference type="PANTHER" id="PTHR23074">
    <property type="entry name" value="AAA DOMAIN-CONTAINING"/>
    <property type="match status" value="1"/>
</dbReference>
<dbReference type="PANTHER" id="PTHR23074:SF78">
    <property type="entry name" value="KATANIN P60 ATPASE-CONTAINING SUBUNIT A-LIKE 2"/>
    <property type="match status" value="1"/>
</dbReference>
<dbReference type="Pfam" id="PF00004">
    <property type="entry name" value="AAA"/>
    <property type="match status" value="1"/>
</dbReference>
<dbReference type="Pfam" id="PF17862">
    <property type="entry name" value="AAA_lid_3"/>
    <property type="match status" value="1"/>
</dbReference>
<dbReference type="Pfam" id="PF08513">
    <property type="entry name" value="LisH"/>
    <property type="match status" value="1"/>
</dbReference>
<dbReference type="SMART" id="SM00382">
    <property type="entry name" value="AAA"/>
    <property type="match status" value="1"/>
</dbReference>
<dbReference type="SMART" id="SM00667">
    <property type="entry name" value="LisH"/>
    <property type="match status" value="1"/>
</dbReference>
<dbReference type="SUPFAM" id="SSF52540">
    <property type="entry name" value="P-loop containing nucleoside triphosphate hydrolases"/>
    <property type="match status" value="1"/>
</dbReference>
<dbReference type="PROSITE" id="PS50896">
    <property type="entry name" value="LISH"/>
    <property type="match status" value="1"/>
</dbReference>
<reference key="1">
    <citation type="submission" date="2006-10" db="EMBL/GenBank/DDBJ databases">
        <authorList>
            <consortium name="NIH - Xenopus Gene Collection (XGC) project"/>
        </authorList>
    </citation>
    <scope>NUCLEOTIDE SEQUENCE [LARGE SCALE MRNA]</scope>
    <source>
        <strain>N6</strain>
        <tissue>Oviduct</tissue>
    </source>
</reference>
<accession>A0JMA9</accession>
<feature type="chain" id="PRO_0000333795" description="Katanin p60 ATPase-containing subunit A-like 2">
    <location>
        <begin position="1"/>
        <end position="542"/>
    </location>
</feature>
<feature type="domain" description="LisH" evidence="2">
    <location>
        <begin position="25"/>
        <end position="57"/>
    </location>
</feature>
<feature type="region of interest" description="Disordered" evidence="3">
    <location>
        <begin position="94"/>
        <end position="126"/>
    </location>
</feature>
<feature type="region of interest" description="Disordered" evidence="3">
    <location>
        <begin position="142"/>
        <end position="168"/>
    </location>
</feature>
<feature type="compositionally biased region" description="Polar residues" evidence="3">
    <location>
        <begin position="114"/>
        <end position="126"/>
    </location>
</feature>
<feature type="binding site" evidence="2">
    <location>
        <begin position="298"/>
        <end position="305"/>
    </location>
    <ligand>
        <name>ATP</name>
        <dbReference type="ChEBI" id="CHEBI:30616"/>
    </ligand>
</feature>
<keyword id="KW-0067">ATP-binding</keyword>
<keyword id="KW-0963">Cytoplasm</keyword>
<keyword id="KW-0206">Cytoskeleton</keyword>
<keyword id="KW-0413">Isomerase</keyword>
<keyword id="KW-0493">Microtubule</keyword>
<keyword id="KW-0547">Nucleotide-binding</keyword>
<keyword id="KW-1185">Reference proteome</keyword>